<keyword id="KW-0002">3D-structure</keyword>
<keyword id="KW-0007">Acetylation</keyword>
<keyword id="KW-0249">Electron transport</keyword>
<keyword id="KW-0472">Membrane</keyword>
<keyword id="KW-0496">Mitochondrion</keyword>
<keyword id="KW-0999">Mitochondrion inner membrane</keyword>
<keyword id="KW-0597">Phosphoprotein</keyword>
<keyword id="KW-1267">Proteomics identification</keyword>
<keyword id="KW-1185">Reference proteome</keyword>
<keyword id="KW-0679">Respiratory chain</keyword>
<keyword id="KW-0813">Transport</keyword>
<comment type="function">
    <text evidence="5">Accessory subunit of the mitochondrial membrane respiratory chain NADH dehydrogenase (Complex I), that is believed not to be involved in catalysis. Complex I functions in the transfer of electrons from NADH to the respiratory chain. The immediate electron acceptor for the enzyme is believed to be ubiquinone.</text>
</comment>
<comment type="subunit">
    <text evidence="4 5">Complex I is composed of 45 different subunits.</text>
</comment>
<comment type="interaction">
    <interactant intactId="EBI-721471">
        <id>O95182</id>
    </interactant>
    <interactant intactId="EBI-8639312">
        <id>P25800</id>
        <label>LMO1</label>
    </interactant>
    <organismsDiffer>false</organismsDiffer>
    <experiments>3</experiments>
</comment>
<comment type="interaction">
    <interactant intactId="EBI-721471">
        <id>O95182</id>
    </interactant>
    <interactant intactId="EBI-2682365">
        <id>Q8N183</id>
        <label>NDUFAF2</label>
    </interactant>
    <organismsDiffer>false</organismsDiffer>
    <experiments>3</experiments>
</comment>
<comment type="interaction">
    <interactant intactId="EBI-721471">
        <id>O95182</id>
    </interactant>
    <interactant intactId="EBI-10244780">
        <id>Q5QGT7</id>
        <label>RTP2</label>
    </interactant>
    <organismsDiffer>false</organismsDiffer>
    <experiments>3</experiments>
</comment>
<comment type="interaction">
    <interactant intactId="EBI-721471">
        <id>O95182</id>
    </interactant>
    <interactant intactId="EBI-10210710">
        <id>P49638</id>
        <label>TTPA</label>
    </interactant>
    <organismsDiffer>false</organismsDiffer>
    <experiments>3</experiments>
</comment>
<comment type="subcellular location">
    <subcellularLocation>
        <location evidence="7">Mitochondrion inner membrane</location>
        <topology evidence="6">Peripheral membrane protein</topology>
        <orientation evidence="6">Matrix side</orientation>
    </subcellularLocation>
</comment>
<comment type="similarity">
    <text evidence="6">Belongs to the complex I NDUFA7 subunit family.</text>
</comment>
<comment type="sequence caution" evidence="6">
    <conflict type="erroneous initiation">
        <sequence resource="EMBL-CDS" id="AAC99399"/>
    </conflict>
</comment>
<sequence>MASATRLIQRLRNWASGHDLQGKLQLRYQEISKRTQPPPKLPVGPSHKLSNNYYCTRDGRRESVPPSIIMSSQKALVSGKPAESSAVAATEKKAVTPAPPIKRWELSSDQPYL</sequence>
<name>NDUA7_HUMAN</name>
<protein>
    <recommendedName>
        <fullName>NADH dehydrogenase [ubiquinone] 1 alpha subcomplex subunit 7</fullName>
    </recommendedName>
    <alternativeName>
        <fullName>Complex I-B14.5a</fullName>
        <shortName>CI-B14.5a</shortName>
    </alternativeName>
    <alternativeName>
        <fullName>NADH-ubiquinone oxidoreductase subunit B14.5a</fullName>
    </alternativeName>
</protein>
<evidence type="ECO:0000250" key="1">
    <source>
        <dbReference type="UniProtKB" id="Q05752"/>
    </source>
</evidence>
<evidence type="ECO:0000250" key="2">
    <source>
        <dbReference type="UniProtKB" id="Q9Z1P6"/>
    </source>
</evidence>
<evidence type="ECO:0000256" key="3">
    <source>
        <dbReference type="SAM" id="MobiDB-lite"/>
    </source>
</evidence>
<evidence type="ECO:0000269" key="4">
    <source>
    </source>
</evidence>
<evidence type="ECO:0000269" key="5">
    <source>
    </source>
</evidence>
<evidence type="ECO:0000305" key="6"/>
<evidence type="ECO:0000305" key="7">
    <source>
    </source>
</evidence>
<evidence type="ECO:0007744" key="8">
    <source>
    </source>
</evidence>
<evidence type="ECO:0007829" key="9">
    <source>
        <dbReference type="PDB" id="5XTB"/>
    </source>
</evidence>
<organism>
    <name type="scientific">Homo sapiens</name>
    <name type="common">Human</name>
    <dbReference type="NCBI Taxonomy" id="9606"/>
    <lineage>
        <taxon>Eukaryota</taxon>
        <taxon>Metazoa</taxon>
        <taxon>Chordata</taxon>
        <taxon>Craniata</taxon>
        <taxon>Vertebrata</taxon>
        <taxon>Euteleostomi</taxon>
        <taxon>Mammalia</taxon>
        <taxon>Eutheria</taxon>
        <taxon>Euarchontoglires</taxon>
        <taxon>Primates</taxon>
        <taxon>Haplorrhini</taxon>
        <taxon>Catarrhini</taxon>
        <taxon>Hominidae</taxon>
        <taxon>Homo</taxon>
    </lineage>
</organism>
<accession>O95182</accession>
<reference key="1">
    <citation type="journal article" date="1998" name="Biochem. Biophys. Res. Commun.">
        <title>cDNA of eight nuclear encoded subunits of NADH:ubiquinone oxidoreductase: human complex I cDNA characterization completed.</title>
        <authorList>
            <person name="Loeffen J.L.C.M."/>
            <person name="Triepels R.H."/>
            <person name="van den Heuvel L.P."/>
            <person name="Schuelke M."/>
            <person name="Buskens C.A.F."/>
            <person name="Smeets R.J.P."/>
            <person name="Trijbels J.M.F."/>
            <person name="Smeitink J.A.M."/>
        </authorList>
    </citation>
    <scope>NUCLEOTIDE SEQUENCE [MRNA]</scope>
</reference>
<reference key="2">
    <citation type="journal article" date="2000" name="Genome Res.">
        <title>Cloning and functional analysis of cDNAs with open reading frames for 300 previously undefined genes expressed in CD34+ hematopoietic stem/progenitor cells.</title>
        <authorList>
            <person name="Zhang Q.-H."/>
            <person name="Ye M."/>
            <person name="Wu X.-Y."/>
            <person name="Ren S.-X."/>
            <person name="Zhao M."/>
            <person name="Zhao C.-J."/>
            <person name="Fu G."/>
            <person name="Shen Y."/>
            <person name="Fan H.-Y."/>
            <person name="Lu G."/>
            <person name="Zhong M."/>
            <person name="Xu X.-R."/>
            <person name="Han Z.-G."/>
            <person name="Zhang J.-W."/>
            <person name="Tao J."/>
            <person name="Huang Q.-H."/>
            <person name="Zhou J."/>
            <person name="Hu G.-X."/>
            <person name="Gu J."/>
            <person name="Chen S.-J."/>
            <person name="Chen Z."/>
        </authorList>
    </citation>
    <scope>NUCLEOTIDE SEQUENCE [LARGE SCALE MRNA]</scope>
    <source>
        <tissue>Umbilical cord blood</tissue>
    </source>
</reference>
<reference key="3">
    <citation type="journal article" date="2004" name="Genome Res.">
        <title>The status, quality, and expansion of the NIH full-length cDNA project: the Mammalian Gene Collection (MGC).</title>
        <authorList>
            <consortium name="The MGC Project Team"/>
        </authorList>
    </citation>
    <scope>NUCLEOTIDE SEQUENCE [LARGE SCALE MRNA]</scope>
    <source>
        <tissue>Lung</tissue>
    </source>
</reference>
<reference key="4">
    <citation type="journal article" date="2003" name="J. Biol. Chem.">
        <title>The subunit composition of the human NADH dehydrogenase obtained by rapid one-step immunopurification.</title>
        <authorList>
            <person name="Murray J."/>
            <person name="Zhang B."/>
            <person name="Taylor S.W."/>
            <person name="Oglesbee D."/>
            <person name="Fahy E."/>
            <person name="Marusich M.F."/>
            <person name="Ghosh S.S."/>
            <person name="Capaldi R.A."/>
        </authorList>
    </citation>
    <scope>IDENTIFICATION IN THE NADH-UBIQUINONE OXIDOREDUCTASE COMPLEX</scope>
    <scope>IDENTIFICATION BY MASS SPECTROMETRY</scope>
</reference>
<reference key="5">
    <citation type="journal article" date="2011" name="BMC Syst. Biol.">
        <title>Initial characterization of the human central proteome.</title>
        <authorList>
            <person name="Burkard T.R."/>
            <person name="Planyavsky M."/>
            <person name="Kaupe I."/>
            <person name="Breitwieser F.P."/>
            <person name="Buerckstuemmer T."/>
            <person name="Bennett K.L."/>
            <person name="Superti-Furga G."/>
            <person name="Colinge J."/>
        </authorList>
    </citation>
    <scope>IDENTIFICATION BY MASS SPECTROMETRY [LARGE SCALE ANALYSIS]</scope>
</reference>
<reference key="6">
    <citation type="journal article" date="2014" name="J. Proteomics">
        <title>An enzyme assisted RP-RPLC approach for in-depth analysis of human liver phosphoproteome.</title>
        <authorList>
            <person name="Bian Y."/>
            <person name="Song C."/>
            <person name="Cheng K."/>
            <person name="Dong M."/>
            <person name="Wang F."/>
            <person name="Huang J."/>
            <person name="Sun D."/>
            <person name="Wang L."/>
            <person name="Ye M."/>
            <person name="Zou H."/>
        </authorList>
    </citation>
    <scope>PHOSPHORYLATION [LARGE SCALE ANALYSIS] AT THR-96</scope>
    <scope>IDENTIFICATION BY MASS SPECTROMETRY [LARGE SCALE ANALYSIS]</scope>
    <source>
        <tissue>Liver</tissue>
    </source>
</reference>
<reference key="7">
    <citation type="journal article" date="2015" name="Proteomics">
        <title>N-terminome analysis of the human mitochondrial proteome.</title>
        <authorList>
            <person name="Vaca Jacome A.S."/>
            <person name="Rabilloud T."/>
            <person name="Schaeffer-Reiss C."/>
            <person name="Rompais M."/>
            <person name="Ayoub D."/>
            <person name="Lane L."/>
            <person name="Bairoch A."/>
            <person name="Van Dorsselaer A."/>
            <person name="Carapito C."/>
        </authorList>
    </citation>
    <scope>IDENTIFICATION BY MASS SPECTROMETRY [LARGE SCALE ANALYSIS]</scope>
</reference>
<reference key="8">
    <citation type="journal article" date="2016" name="Nature">
        <title>Accessory subunits are integral for assembly and function of human mitochondrial complex I.</title>
        <authorList>
            <person name="Stroud D.A."/>
            <person name="Surgenor E.E."/>
            <person name="Formosa L.E."/>
            <person name="Reljic B."/>
            <person name="Frazier A.E."/>
            <person name="Dibley M.G."/>
            <person name="Osellame L.D."/>
            <person name="Stait T."/>
            <person name="Beilharz T.H."/>
            <person name="Thorburn D.R."/>
            <person name="Salim A."/>
            <person name="Ryan M.T."/>
        </authorList>
    </citation>
    <scope>FUNCTION</scope>
    <scope>IDENTIFICATION IN THE NADH-UBIQUINONE OXIDOREDUCTASE COMPLEX</scope>
</reference>
<gene>
    <name type="primary">NDUFA7</name>
</gene>
<feature type="initiator methionine" description="Removed" evidence="1">
    <location>
        <position position="1"/>
    </location>
</feature>
<feature type="chain" id="PRO_0000118834" description="NADH dehydrogenase [ubiquinone] 1 alpha subcomplex subunit 7">
    <location>
        <begin position="2"/>
        <end position="113"/>
    </location>
</feature>
<feature type="region of interest" description="Disordered" evidence="3">
    <location>
        <begin position="32"/>
        <end position="51"/>
    </location>
</feature>
<feature type="modified residue" description="N-acetylalanine" evidence="1">
    <location>
        <position position="2"/>
    </location>
</feature>
<feature type="modified residue" description="N6-acetyllysine" evidence="2">
    <location>
        <position position="40"/>
    </location>
</feature>
<feature type="modified residue" description="Phosphothreonine" evidence="8">
    <location>
        <position position="96"/>
    </location>
</feature>
<feature type="sequence variant" id="VAR_050589" description="In dbSNP:rs2288415.">
    <original>P</original>
    <variation>A</variation>
    <location>
        <position position="66"/>
    </location>
</feature>
<feature type="helix" evidence="9">
    <location>
        <begin position="6"/>
        <end position="16"/>
    </location>
</feature>
<feature type="helix" evidence="9">
    <location>
        <begin position="54"/>
        <end position="57"/>
    </location>
</feature>
<feature type="helix" evidence="9">
    <location>
        <begin position="60"/>
        <end position="62"/>
    </location>
</feature>
<proteinExistence type="evidence at protein level"/>
<dbReference type="EMBL" id="AF050637">
    <property type="protein sequence ID" value="AAD05427.1"/>
    <property type="molecule type" value="mRNA"/>
</dbReference>
<dbReference type="EMBL" id="AF054178">
    <property type="protein sequence ID" value="AAC99399.1"/>
    <property type="status" value="ALT_INIT"/>
    <property type="molecule type" value="mRNA"/>
</dbReference>
<dbReference type="EMBL" id="BC003102">
    <property type="protein sequence ID" value="AAH03102.1"/>
    <property type="molecule type" value="mRNA"/>
</dbReference>
<dbReference type="CCDS" id="CCDS42492.1"/>
<dbReference type="PIR" id="JE0380">
    <property type="entry name" value="JE0380"/>
</dbReference>
<dbReference type="RefSeq" id="NP_004992.2">
    <property type="nucleotide sequence ID" value="NM_005001.5"/>
</dbReference>
<dbReference type="PDB" id="5XTB">
    <property type="method" value="EM"/>
    <property type="resolution" value="3.40 A"/>
    <property type="chains" value="I=4-113"/>
</dbReference>
<dbReference type="PDB" id="5XTD">
    <property type="method" value="EM"/>
    <property type="resolution" value="3.70 A"/>
    <property type="chains" value="I=4-113"/>
</dbReference>
<dbReference type="PDB" id="5XTH">
    <property type="method" value="EM"/>
    <property type="resolution" value="3.90 A"/>
    <property type="chains" value="I=4-113"/>
</dbReference>
<dbReference type="PDB" id="5XTI">
    <property type="method" value="EM"/>
    <property type="resolution" value="17.40 A"/>
    <property type="chains" value="BI/I=4-113"/>
</dbReference>
<dbReference type="PDBsum" id="5XTB"/>
<dbReference type="PDBsum" id="5XTD"/>
<dbReference type="PDBsum" id="5XTH"/>
<dbReference type="PDBsum" id="5XTI"/>
<dbReference type="SMR" id="O95182"/>
<dbReference type="BioGRID" id="110781">
    <property type="interactions" value="216"/>
</dbReference>
<dbReference type="ComplexPortal" id="CPX-577">
    <property type="entry name" value="Mitochondrial respiratory chain complex I"/>
</dbReference>
<dbReference type="CORUM" id="O95182"/>
<dbReference type="FunCoup" id="O95182">
    <property type="interactions" value="961"/>
</dbReference>
<dbReference type="IntAct" id="O95182">
    <property type="interactions" value="80"/>
</dbReference>
<dbReference type="MINT" id="O95182"/>
<dbReference type="STRING" id="9606.ENSP00000301457"/>
<dbReference type="BindingDB" id="O95182"/>
<dbReference type="ChEMBL" id="CHEMBL2363065"/>
<dbReference type="DrugBank" id="DB00157">
    <property type="generic name" value="NADH"/>
</dbReference>
<dbReference type="DrugCentral" id="O95182"/>
<dbReference type="GlyGen" id="O95182">
    <property type="glycosylation" value="1 site"/>
</dbReference>
<dbReference type="iPTMnet" id="O95182"/>
<dbReference type="PhosphoSitePlus" id="O95182"/>
<dbReference type="SwissPalm" id="O95182"/>
<dbReference type="BioMuta" id="NDUFA7"/>
<dbReference type="jPOST" id="O95182"/>
<dbReference type="MassIVE" id="O95182"/>
<dbReference type="PaxDb" id="9606-ENSP00000301457"/>
<dbReference type="PeptideAtlas" id="O95182"/>
<dbReference type="ProteomicsDB" id="50692"/>
<dbReference type="Pumba" id="O95182"/>
<dbReference type="TopDownProteomics" id="O95182"/>
<dbReference type="Antibodypedia" id="70788">
    <property type="antibodies" value="297 antibodies from 27 providers"/>
</dbReference>
<dbReference type="DNASU" id="4701"/>
<dbReference type="Ensembl" id="ENST00000301457.3">
    <property type="protein sequence ID" value="ENSP00000301457.1"/>
    <property type="gene ID" value="ENSG00000267855.6"/>
</dbReference>
<dbReference type="Ensembl" id="ENST00000593729.5">
    <property type="protein sequence ID" value="ENSP00000470962.1"/>
    <property type="gene ID" value="ENSG00000267855.6"/>
</dbReference>
<dbReference type="GeneID" id="4701"/>
<dbReference type="KEGG" id="hsa:4701"/>
<dbReference type="MANE-Select" id="ENST00000301457.3">
    <property type="protein sequence ID" value="ENSP00000301457.1"/>
    <property type="RefSeq nucleotide sequence ID" value="NM_005001.5"/>
    <property type="RefSeq protein sequence ID" value="NP_004992.2"/>
</dbReference>
<dbReference type="UCSC" id="uc002mjm.3">
    <property type="organism name" value="human"/>
</dbReference>
<dbReference type="AGR" id="HGNC:7691"/>
<dbReference type="CTD" id="4701"/>
<dbReference type="DisGeNET" id="4701"/>
<dbReference type="GeneCards" id="NDUFA7"/>
<dbReference type="HGNC" id="HGNC:7691">
    <property type="gene designation" value="NDUFA7"/>
</dbReference>
<dbReference type="HPA" id="ENSG00000267855">
    <property type="expression patterns" value="Low tissue specificity"/>
</dbReference>
<dbReference type="MalaCards" id="NDUFA7"/>
<dbReference type="MIM" id="602139">
    <property type="type" value="gene"/>
</dbReference>
<dbReference type="neXtProt" id="NX_O95182"/>
<dbReference type="OpenTargets" id="ENSG00000267855"/>
<dbReference type="PharmGKB" id="PA31497"/>
<dbReference type="VEuPathDB" id="HostDB:ENSG00000267855"/>
<dbReference type="eggNOG" id="KOG4630">
    <property type="taxonomic scope" value="Eukaryota"/>
</dbReference>
<dbReference type="GeneTree" id="ENSGT00390000006553"/>
<dbReference type="HOGENOM" id="CLU_149566_0_0_1"/>
<dbReference type="InParanoid" id="O95182"/>
<dbReference type="OMA" id="ANYYFTR"/>
<dbReference type="OrthoDB" id="10063829at2759"/>
<dbReference type="PAN-GO" id="O95182">
    <property type="GO annotations" value="2 GO annotations based on evolutionary models"/>
</dbReference>
<dbReference type="PhylomeDB" id="O95182"/>
<dbReference type="TreeFam" id="TF319126"/>
<dbReference type="BioCyc" id="MetaCyc:HS09632-MONOMER"/>
<dbReference type="PathwayCommons" id="O95182"/>
<dbReference type="Reactome" id="R-HSA-611105">
    <property type="pathway name" value="Respiratory electron transport"/>
</dbReference>
<dbReference type="Reactome" id="R-HSA-6799198">
    <property type="pathway name" value="Complex I biogenesis"/>
</dbReference>
<dbReference type="SignaLink" id="O95182"/>
<dbReference type="SIGNOR" id="O95182"/>
<dbReference type="BioGRID-ORCS" id="4701">
    <property type="hits" value="15 hits in 1159 CRISPR screens"/>
</dbReference>
<dbReference type="CD-CODE" id="FB4E32DD">
    <property type="entry name" value="Presynaptic clusters and postsynaptic densities"/>
</dbReference>
<dbReference type="ChiTaRS" id="NDUFA7">
    <property type="organism name" value="human"/>
</dbReference>
<dbReference type="GenomeRNAi" id="4701"/>
<dbReference type="Pharos" id="O95182">
    <property type="development level" value="Tclin"/>
</dbReference>
<dbReference type="PRO" id="PR:O95182"/>
<dbReference type="Proteomes" id="UP000005640">
    <property type="component" value="Chromosome 19"/>
</dbReference>
<dbReference type="RNAct" id="O95182">
    <property type="molecule type" value="protein"/>
</dbReference>
<dbReference type="Bgee" id="ENSG00000267855">
    <property type="expression patterns" value="Expressed in hindlimb stylopod muscle and 98 other cell types or tissues"/>
</dbReference>
<dbReference type="ExpressionAtlas" id="O95182">
    <property type="expression patterns" value="baseline and differential"/>
</dbReference>
<dbReference type="GO" id="GO:0005743">
    <property type="term" value="C:mitochondrial inner membrane"/>
    <property type="evidence" value="ECO:0000314"/>
    <property type="project" value="ComplexPortal"/>
</dbReference>
<dbReference type="GO" id="GO:0005739">
    <property type="term" value="C:mitochondrion"/>
    <property type="evidence" value="ECO:0006056"/>
    <property type="project" value="FlyBase"/>
</dbReference>
<dbReference type="GO" id="GO:0045271">
    <property type="term" value="C:respiratory chain complex I"/>
    <property type="evidence" value="ECO:0000314"/>
    <property type="project" value="UniProtKB"/>
</dbReference>
<dbReference type="GO" id="GO:0008137">
    <property type="term" value="F:NADH dehydrogenase (ubiquinone) activity"/>
    <property type="evidence" value="ECO:0000303"/>
    <property type="project" value="UniProtKB"/>
</dbReference>
<dbReference type="GO" id="GO:0009060">
    <property type="term" value="P:aerobic respiration"/>
    <property type="evidence" value="ECO:0000303"/>
    <property type="project" value="ComplexPortal"/>
</dbReference>
<dbReference type="GO" id="GO:0006120">
    <property type="term" value="P:mitochondrial electron transport, NADH to ubiquinone"/>
    <property type="evidence" value="ECO:0000318"/>
    <property type="project" value="GO_Central"/>
</dbReference>
<dbReference type="GO" id="GO:0042776">
    <property type="term" value="P:proton motive force-driven mitochondrial ATP synthesis"/>
    <property type="evidence" value="ECO:0000303"/>
    <property type="project" value="ComplexPortal"/>
</dbReference>
<dbReference type="InterPro" id="IPR009947">
    <property type="entry name" value="NDUA7"/>
</dbReference>
<dbReference type="PANTHER" id="PTHR12485:SF1">
    <property type="entry name" value="NADH DEHYDROGENASE [UBIQUINONE] 1 ALPHA SUBCOMPLEX SUBUNIT 7"/>
    <property type="match status" value="1"/>
</dbReference>
<dbReference type="PANTHER" id="PTHR12485">
    <property type="entry name" value="NADH-UBIQUINONE OXIDOREDUCTASE SUBUNIT B"/>
    <property type="match status" value="1"/>
</dbReference>
<dbReference type="Pfam" id="PF07347">
    <property type="entry name" value="CI-B14_5a"/>
    <property type="match status" value="1"/>
</dbReference>